<keyword id="KW-0025">Alternative splicing</keyword>
<keyword id="KW-0106">Calcium</keyword>
<keyword id="KW-0217">Developmental protein</keyword>
<keyword id="KW-1015">Disulfide bond</keyword>
<keyword id="KW-0245">EGF-like domain</keyword>
<keyword id="KW-0325">Glycoprotein</keyword>
<keyword id="KW-0446">Lipid-binding</keyword>
<keyword id="KW-1267">Proteomics identification</keyword>
<keyword id="KW-1185">Reference proteome</keyword>
<keyword id="KW-0677">Repeat</keyword>
<keyword id="KW-0964">Secreted</keyword>
<keyword id="KW-0732">Signal</keyword>
<evidence type="ECO:0000250" key="1"/>
<evidence type="ECO:0000250" key="2">
    <source>
        <dbReference type="UniProtKB" id="Q8IX30"/>
    </source>
</evidence>
<evidence type="ECO:0000250" key="3">
    <source>
        <dbReference type="UniProtKB" id="Q9JJS0"/>
    </source>
</evidence>
<evidence type="ECO:0000255" key="4"/>
<evidence type="ECO:0000255" key="5">
    <source>
        <dbReference type="PROSITE-ProRule" id="PRU00059"/>
    </source>
</evidence>
<evidence type="ECO:0000255" key="6">
    <source>
        <dbReference type="PROSITE-ProRule" id="PRU00076"/>
    </source>
</evidence>
<evidence type="ECO:0000269" key="7">
    <source>
    </source>
</evidence>
<evidence type="ECO:0000269" key="8">
    <source>
    </source>
</evidence>
<evidence type="ECO:0000269" key="9">
    <source>
    </source>
</evidence>
<evidence type="ECO:0000269" key="10">
    <source>
    </source>
</evidence>
<evidence type="ECO:0000269" key="11">
    <source>
    </source>
</evidence>
<evidence type="ECO:0000269" key="12">
    <source>
    </source>
</evidence>
<evidence type="ECO:0000269" key="13">
    <source>
    </source>
</evidence>
<evidence type="ECO:0000269" key="14">
    <source>
    </source>
</evidence>
<evidence type="ECO:0000303" key="15">
    <source>
    </source>
</evidence>
<evidence type="ECO:0000303" key="16">
    <source>
    </source>
</evidence>
<evidence type="ECO:0000303" key="17">
    <source>
    </source>
</evidence>
<evidence type="ECO:0000303" key="18">
    <source>
    </source>
</evidence>
<evidence type="ECO:0000305" key="19"/>
<evidence type="ECO:0000312" key="20">
    <source>
        <dbReference type="HGNC" id="HGNC:30425"/>
    </source>
</evidence>
<accession>Q9NQ36</accession>
<accession>Q2NKQ8</accession>
<accession>Q6ZWI1</accession>
<organism>
    <name type="scientific">Homo sapiens</name>
    <name type="common">Human</name>
    <dbReference type="NCBI Taxonomy" id="9606"/>
    <lineage>
        <taxon>Eukaryota</taxon>
        <taxon>Metazoa</taxon>
        <taxon>Chordata</taxon>
        <taxon>Craniata</taxon>
        <taxon>Vertebrata</taxon>
        <taxon>Euteleostomi</taxon>
        <taxon>Mammalia</taxon>
        <taxon>Eutheria</taxon>
        <taxon>Euarchontoglires</taxon>
        <taxon>Primates</taxon>
        <taxon>Haplorrhini</taxon>
        <taxon>Catarrhini</taxon>
        <taxon>Hominidae</taxon>
        <taxon>Homo</taxon>
    </lineage>
</organism>
<sequence length="999" mass="109957">MGVAGRNRPGAAWAVLLLLLLLPPLLLLAGAVPPGRGRAAGPQEDVDECAQGLDDCHADALCQNTPTSYKCSCKPGYQGEGRQCEDIDECGNELNGGCVHDCLNIPGNYRCTCFDGFMLAHDGHNCLDVDECLENNGGCQHTCVNVMGSYECCCKEGFFLSDNQHTCIHRSEEGLSCMNKDHGCSHICKEAPRGSVACECRPGFELAKNQRDCILTCNHGNGGCQHSCDDTADGPECSCHPQYKMHTDGRSCLEREDTVLEVTESNTTSVVDGDKRVKRRLLMETCAVNNGGCDRTCKDTSTGVHCSCPVGFTLQLDGKTCKDIDECQTRNGGCDHFCKNIVGSFDCGCKKGFKLLTDEKSCQDVDECSLDRTCDHSCINHPGTFACACNRGYTLYGFTHCGDTNECSINNGGCQQVCVNTVGSYECQCHPGYKLHWNKKDCVEVKGLLPTSVSPRVSLHCGKSGGGDGCFLRCHSGIHLSSDVTTIRTSVTFKLNEGKCSLKNAELFPEGLRPALPEKHSSVKESFRYVNLTCSSGKQVPGAPGRPSTPKEMFITVEFELETNQKEVTASCDLSCIVKRTEKRLRKAIRTLRKAVHREQFHLQLSGMNLDVAKKPPRTSERQAESCGVGQGHAENQCVSCRAGTYYDGARERCILCPNGTFQNEEGQMTCEPCPRPGNSGALKTPEAWNMSECGGLCQPGEYSADGFAPCQLCALGTFQPEAGRTSCFPCGGGLATKHQGATSFQDCETRVQCSPGHFYNTTTHRCIRCPVGTYQPEFGKNNCVSCPGNTTTDFDGSTNITQCKNRRCGGELGDFTGYIESPNYPGNYPANTECTWTINPPPKRRILIVVPEIFLPIEDDCGDYLVMRKTSSSNSVTTYETCQTYERPIAFTSRSKKLWIQFKSNEGNSARGFQVPYVTYDEDYQELIEDIVRDGRLYASENHQEILKDKKLIKALFDVLAHPQNYFKYTAQESREMFPRSFIRLLRSKVSRFLRPYK</sequence>
<dbReference type="EMBL" id="AJ400877">
    <property type="protein sequence ID" value="CAB92285.1"/>
    <property type="molecule type" value="Genomic_DNA"/>
</dbReference>
<dbReference type="EMBL" id="AK123039">
    <property type="protein sequence ID" value="BAC85521.1"/>
    <property type="molecule type" value="mRNA"/>
</dbReference>
<dbReference type="EMBL" id="AC079296">
    <property type="status" value="NOT_ANNOTATED_CDS"/>
    <property type="molecule type" value="Genomic_DNA"/>
</dbReference>
<dbReference type="EMBL" id="BC111690">
    <property type="protein sequence ID" value="AAI11691.1"/>
    <property type="molecule type" value="mRNA"/>
</dbReference>
<dbReference type="CCDS" id="CCDS53599.1">
    <molecule id="Q9NQ36-3"/>
</dbReference>
<dbReference type="CCDS" id="CCDS7797.2">
    <molecule id="Q9NQ36-2"/>
</dbReference>
<dbReference type="CCDS" id="CCDS81553.1">
    <molecule id="Q9NQ36-1"/>
</dbReference>
<dbReference type="RefSeq" id="NP_001164161.1">
    <molecule id="Q9NQ36-3"/>
    <property type="nucleotide sequence ID" value="NM_001170690.3"/>
</dbReference>
<dbReference type="RefSeq" id="NP_001317128.1">
    <molecule id="Q9NQ36-1"/>
    <property type="nucleotide sequence ID" value="NM_001330199.3"/>
</dbReference>
<dbReference type="RefSeq" id="NP_066025.2">
    <molecule id="Q9NQ36-2"/>
    <property type="nucleotide sequence ID" value="NM_020974.4"/>
</dbReference>
<dbReference type="BioGRID" id="121754">
    <property type="interactions" value="2"/>
</dbReference>
<dbReference type="CORUM" id="Q9NQ36"/>
<dbReference type="FunCoup" id="Q9NQ36">
    <property type="interactions" value="149"/>
</dbReference>
<dbReference type="IntAct" id="Q9NQ36">
    <property type="interactions" value="1"/>
</dbReference>
<dbReference type="MINT" id="Q9NQ36"/>
<dbReference type="STRING" id="9606.ENSP00000310658"/>
<dbReference type="GlyConnect" id="1745">
    <property type="glycosylation" value="1 N-Linked glycan (1 site)"/>
</dbReference>
<dbReference type="GlyCosmos" id="Q9NQ36">
    <property type="glycosylation" value="2 sites, 1 glycan"/>
</dbReference>
<dbReference type="GlyGen" id="Q9NQ36">
    <property type="glycosylation" value="4 sites, 1 N-linked glycan (1 site), 1 O-linked glycan (1 site)"/>
</dbReference>
<dbReference type="iPTMnet" id="Q9NQ36"/>
<dbReference type="PhosphoSitePlus" id="Q9NQ36"/>
<dbReference type="BioMuta" id="SCUBE2"/>
<dbReference type="DMDM" id="311033510"/>
<dbReference type="jPOST" id="Q9NQ36"/>
<dbReference type="MassIVE" id="Q9NQ36"/>
<dbReference type="PaxDb" id="9606-ENSP00000429969"/>
<dbReference type="PeptideAtlas" id="Q9NQ36"/>
<dbReference type="ProteomicsDB" id="82071">
    <molecule id="Q9NQ36-1"/>
</dbReference>
<dbReference type="ProteomicsDB" id="82072">
    <molecule id="Q9NQ36-2"/>
</dbReference>
<dbReference type="ProteomicsDB" id="82073">
    <molecule id="Q9NQ36-3"/>
</dbReference>
<dbReference type="Antibodypedia" id="1601">
    <property type="antibodies" value="172 antibodies from 26 providers"/>
</dbReference>
<dbReference type="DNASU" id="57758"/>
<dbReference type="Ensembl" id="ENST00000309263.7">
    <molecule id="Q9NQ36-1"/>
    <property type="protein sequence ID" value="ENSP00000310658.3"/>
    <property type="gene ID" value="ENSG00000175356.14"/>
</dbReference>
<dbReference type="Ensembl" id="ENST00000450649.6">
    <molecule id="Q9NQ36-3"/>
    <property type="protein sequence ID" value="ENSP00000415187.2"/>
    <property type="gene ID" value="ENSG00000175356.14"/>
</dbReference>
<dbReference type="Ensembl" id="ENST00000520467.5">
    <molecule id="Q9NQ36-2"/>
    <property type="protein sequence ID" value="ENSP00000429969.1"/>
    <property type="gene ID" value="ENSG00000175356.14"/>
</dbReference>
<dbReference type="GeneID" id="57758"/>
<dbReference type="KEGG" id="hsa:57758"/>
<dbReference type="UCSC" id="uc001mhj.3">
    <molecule id="Q9NQ36-1"/>
    <property type="organism name" value="human"/>
</dbReference>
<dbReference type="AGR" id="HGNC:30425"/>
<dbReference type="CTD" id="57758"/>
<dbReference type="DisGeNET" id="57758"/>
<dbReference type="GeneCards" id="SCUBE2"/>
<dbReference type="HGNC" id="HGNC:30425">
    <property type="gene designation" value="SCUBE2"/>
</dbReference>
<dbReference type="HPA" id="ENSG00000175356">
    <property type="expression patterns" value="Tissue enhanced (epididymis)"/>
</dbReference>
<dbReference type="MalaCards" id="SCUBE2"/>
<dbReference type="MIM" id="611747">
    <property type="type" value="gene"/>
</dbReference>
<dbReference type="neXtProt" id="NX_Q9NQ36"/>
<dbReference type="OpenTargets" id="ENSG00000175356"/>
<dbReference type="PharmGKB" id="PA134908812"/>
<dbReference type="VEuPathDB" id="HostDB:ENSG00000175356"/>
<dbReference type="GeneTree" id="ENSGT00940000153185"/>
<dbReference type="HOGENOM" id="CLU_013079_0_0_1"/>
<dbReference type="InParanoid" id="Q9NQ36"/>
<dbReference type="OrthoDB" id="4062651at2759"/>
<dbReference type="PAN-GO" id="Q9NQ36">
    <property type="GO annotations" value="3 GO annotations based on evolutionary models"/>
</dbReference>
<dbReference type="PhylomeDB" id="Q9NQ36"/>
<dbReference type="TreeFam" id="TF351672"/>
<dbReference type="PathwayCommons" id="Q9NQ36"/>
<dbReference type="Reactome" id="R-HSA-5362798">
    <property type="pathway name" value="Release of Hh-Np from the secreting cell"/>
</dbReference>
<dbReference type="BioGRID-ORCS" id="57758">
    <property type="hits" value="10 hits in 1148 CRISPR screens"/>
</dbReference>
<dbReference type="ChiTaRS" id="SCUBE2">
    <property type="organism name" value="human"/>
</dbReference>
<dbReference type="GenomeRNAi" id="57758"/>
<dbReference type="Pharos" id="Q9NQ36">
    <property type="development level" value="Tbio"/>
</dbReference>
<dbReference type="PRO" id="PR:Q9NQ36"/>
<dbReference type="Proteomes" id="UP000005640">
    <property type="component" value="Chromosome 11"/>
</dbReference>
<dbReference type="RNAct" id="Q9NQ36">
    <property type="molecule type" value="protein"/>
</dbReference>
<dbReference type="Bgee" id="ENSG00000175356">
    <property type="expression patterns" value="Expressed in corpus epididymis and 133 other cell types or tissues"/>
</dbReference>
<dbReference type="ExpressionAtlas" id="Q9NQ36">
    <property type="expression patterns" value="baseline and differential"/>
</dbReference>
<dbReference type="GO" id="GO:0009986">
    <property type="term" value="C:cell surface"/>
    <property type="evidence" value="ECO:0000318"/>
    <property type="project" value="GO_Central"/>
</dbReference>
<dbReference type="GO" id="GO:0005576">
    <property type="term" value="C:extracellular region"/>
    <property type="evidence" value="ECO:0000304"/>
    <property type="project" value="Reactome"/>
</dbReference>
<dbReference type="GO" id="GO:0005615">
    <property type="term" value="C:extracellular space"/>
    <property type="evidence" value="ECO:0000318"/>
    <property type="project" value="GO_Central"/>
</dbReference>
<dbReference type="GO" id="GO:0005509">
    <property type="term" value="F:calcium ion binding"/>
    <property type="evidence" value="ECO:0007669"/>
    <property type="project" value="InterPro"/>
</dbReference>
<dbReference type="GO" id="GO:0008289">
    <property type="term" value="F:lipid binding"/>
    <property type="evidence" value="ECO:0007669"/>
    <property type="project" value="UniProtKB-KW"/>
</dbReference>
<dbReference type="GO" id="GO:0007165">
    <property type="term" value="P:signal transduction"/>
    <property type="evidence" value="ECO:0000318"/>
    <property type="project" value="GO_Central"/>
</dbReference>
<dbReference type="CDD" id="cd00041">
    <property type="entry name" value="CUB"/>
    <property type="match status" value="1"/>
</dbReference>
<dbReference type="CDD" id="cd00054">
    <property type="entry name" value="EGF_CA"/>
    <property type="match status" value="1"/>
</dbReference>
<dbReference type="FunFam" id="2.10.25.10:FF:000032">
    <property type="entry name" value="signal peptide, CUB and EGF-like domain-containing protein 2 isoform X1"/>
    <property type="match status" value="1"/>
</dbReference>
<dbReference type="FunFam" id="2.10.50.10:FF:000002">
    <property type="entry name" value="signal peptide, CUB and EGF-like domain-containing protein 2 isoform X1"/>
    <property type="match status" value="1"/>
</dbReference>
<dbReference type="FunFam" id="2.10.25.10:FF:000199">
    <property type="entry name" value="signal peptide, CUB and EGF-like domain-containing protein 2 isoform X2"/>
    <property type="match status" value="1"/>
</dbReference>
<dbReference type="FunFam" id="2.10.25.10:FF:000237">
    <property type="entry name" value="Signal peptide, CUB domain and EGF like domain containing 2"/>
    <property type="match status" value="1"/>
</dbReference>
<dbReference type="FunFam" id="2.10.25.10:FF:000256">
    <property type="entry name" value="Signal peptide, CUB domain and EGF like domain containing 2"/>
    <property type="match status" value="1"/>
</dbReference>
<dbReference type="FunFam" id="2.10.50.10:FF:000028">
    <property type="entry name" value="Signal peptide, CUB domain and EGF like domain containing 2"/>
    <property type="match status" value="1"/>
</dbReference>
<dbReference type="FunFam" id="2.10.50.10:FF:000029">
    <property type="entry name" value="Signal peptide, CUB domain and EGF like domain containing 2"/>
    <property type="match status" value="1"/>
</dbReference>
<dbReference type="FunFam" id="2.10.25.10:FF:000028">
    <property type="entry name" value="Signal peptide, CUB domain and EGF-like domain-containing 2"/>
    <property type="match status" value="1"/>
</dbReference>
<dbReference type="FunFam" id="2.10.25.10:FF:000030">
    <property type="entry name" value="Signal peptide, CUB domain and EGF-like domain-containing 2"/>
    <property type="match status" value="1"/>
</dbReference>
<dbReference type="FunFam" id="2.10.25.10:FF:000035">
    <property type="entry name" value="Signal peptide, CUB domain and EGF-like domain-containing 2"/>
    <property type="match status" value="1"/>
</dbReference>
<dbReference type="FunFam" id="2.10.25.10:FF:000037">
    <property type="entry name" value="Signal peptide, CUB domain and EGF-like domain-containing 2"/>
    <property type="match status" value="1"/>
</dbReference>
<dbReference type="FunFam" id="2.60.120.290:FF:000002">
    <property type="entry name" value="Signal peptide, CUB domain and EGF-like domain-containing 2"/>
    <property type="match status" value="1"/>
</dbReference>
<dbReference type="FunFam" id="2.10.25.10:FF:000008">
    <property type="entry name" value="Signal peptide, CUB domain, EGF-like 2"/>
    <property type="match status" value="1"/>
</dbReference>
<dbReference type="Gene3D" id="2.10.25.10">
    <property type="entry name" value="Laminin"/>
    <property type="match status" value="9"/>
</dbReference>
<dbReference type="Gene3D" id="2.60.120.290">
    <property type="entry name" value="Spermadhesin, CUB domain"/>
    <property type="match status" value="1"/>
</dbReference>
<dbReference type="Gene3D" id="2.10.50.10">
    <property type="entry name" value="Tumor Necrosis Factor Receptor, subunit A, domain 2"/>
    <property type="match status" value="3"/>
</dbReference>
<dbReference type="InterPro" id="IPR026823">
    <property type="entry name" value="cEGF"/>
</dbReference>
<dbReference type="InterPro" id="IPR000859">
    <property type="entry name" value="CUB_dom"/>
</dbReference>
<dbReference type="InterPro" id="IPR001881">
    <property type="entry name" value="EGF-like_Ca-bd_dom"/>
</dbReference>
<dbReference type="InterPro" id="IPR000742">
    <property type="entry name" value="EGF-like_dom"/>
</dbReference>
<dbReference type="InterPro" id="IPR000152">
    <property type="entry name" value="EGF-type_Asp/Asn_hydroxyl_site"/>
</dbReference>
<dbReference type="InterPro" id="IPR018097">
    <property type="entry name" value="EGF_Ca-bd_CS"/>
</dbReference>
<dbReference type="InterPro" id="IPR024731">
    <property type="entry name" value="EGF_dom"/>
</dbReference>
<dbReference type="InterPro" id="IPR009030">
    <property type="entry name" value="Growth_fac_rcpt_cys_sf"/>
</dbReference>
<dbReference type="InterPro" id="IPR049883">
    <property type="entry name" value="NOTCH1_EGF-like"/>
</dbReference>
<dbReference type="InterPro" id="IPR052071">
    <property type="entry name" value="SCUB_EGF-like_domain"/>
</dbReference>
<dbReference type="InterPro" id="IPR035914">
    <property type="entry name" value="Sperma_CUB_dom_sf"/>
</dbReference>
<dbReference type="InterPro" id="IPR011641">
    <property type="entry name" value="Tyr-kin_ephrin_A/B_rcpt-like"/>
</dbReference>
<dbReference type="PANTHER" id="PTHR24046">
    <property type="entry name" value="SIGNAL PEPTIDE, CUB AND EGF-LIKE DOMAIN-CONTAINING"/>
    <property type="match status" value="1"/>
</dbReference>
<dbReference type="PANTHER" id="PTHR24046:SF3">
    <property type="entry name" value="SIGNAL PEPTIDE, CUB AND EGF-LIKE DOMAIN-CONTAINING PROTEIN 2"/>
    <property type="match status" value="1"/>
</dbReference>
<dbReference type="Pfam" id="PF12662">
    <property type="entry name" value="cEGF"/>
    <property type="match status" value="1"/>
</dbReference>
<dbReference type="Pfam" id="PF00431">
    <property type="entry name" value="CUB"/>
    <property type="match status" value="1"/>
</dbReference>
<dbReference type="Pfam" id="PF12947">
    <property type="entry name" value="EGF_3"/>
    <property type="match status" value="1"/>
</dbReference>
<dbReference type="Pfam" id="PF07645">
    <property type="entry name" value="EGF_CA"/>
    <property type="match status" value="1"/>
</dbReference>
<dbReference type="Pfam" id="PF07699">
    <property type="entry name" value="Ephrin_rec_like"/>
    <property type="match status" value="3"/>
</dbReference>
<dbReference type="Pfam" id="PF14670">
    <property type="entry name" value="FXa_inhibition"/>
    <property type="match status" value="4"/>
</dbReference>
<dbReference type="SMART" id="SM00042">
    <property type="entry name" value="CUB"/>
    <property type="match status" value="1"/>
</dbReference>
<dbReference type="SMART" id="SM00181">
    <property type="entry name" value="EGF"/>
    <property type="match status" value="10"/>
</dbReference>
<dbReference type="SMART" id="SM00179">
    <property type="entry name" value="EGF_CA"/>
    <property type="match status" value="8"/>
</dbReference>
<dbReference type="SMART" id="SM01411">
    <property type="entry name" value="Ephrin_rec_like"/>
    <property type="match status" value="3"/>
</dbReference>
<dbReference type="SUPFAM" id="SSF57196">
    <property type="entry name" value="EGF/Laminin"/>
    <property type="match status" value="1"/>
</dbReference>
<dbReference type="SUPFAM" id="SSF57184">
    <property type="entry name" value="Growth factor receptor domain"/>
    <property type="match status" value="4"/>
</dbReference>
<dbReference type="SUPFAM" id="SSF49854">
    <property type="entry name" value="Spermadhesin, CUB domain"/>
    <property type="match status" value="1"/>
</dbReference>
<dbReference type="PROSITE" id="PS00010">
    <property type="entry name" value="ASX_HYDROXYL"/>
    <property type="match status" value="6"/>
</dbReference>
<dbReference type="PROSITE" id="PS01180">
    <property type="entry name" value="CUB"/>
    <property type="match status" value="1"/>
</dbReference>
<dbReference type="PROSITE" id="PS01186">
    <property type="entry name" value="EGF_2"/>
    <property type="match status" value="8"/>
</dbReference>
<dbReference type="PROSITE" id="PS50026">
    <property type="entry name" value="EGF_3"/>
    <property type="match status" value="4"/>
</dbReference>
<dbReference type="PROSITE" id="PS01187">
    <property type="entry name" value="EGF_CA"/>
    <property type="match status" value="6"/>
</dbReference>
<protein>
    <recommendedName>
        <fullName evidence="17">Signal peptide, CUB and EGF-like domain-containing protein 2</fullName>
    </recommendedName>
    <alternativeName>
        <fullName evidence="3">Protein CEGP1</fullName>
    </alternativeName>
    <alternativeName>
        <fullName evidence="3">Scube/You</fullName>
    </alternativeName>
</protein>
<name>SCUB2_HUMAN</name>
<feature type="signal peptide" evidence="4">
    <location>
        <begin position="1"/>
        <end position="31"/>
    </location>
</feature>
<feature type="chain" id="PRO_0000255580" description="Signal peptide, CUB and EGF-like domain-containing protein 2">
    <location>
        <begin position="32"/>
        <end position="999"/>
    </location>
</feature>
<feature type="domain" description="EGF-like 1; calcium-binding" evidence="6">
    <location>
        <begin position="45"/>
        <end position="85"/>
    </location>
</feature>
<feature type="domain" description="EGF-like 2; calcium-binding" evidence="6">
    <location>
        <begin position="86"/>
        <end position="127"/>
    </location>
</feature>
<feature type="domain" description="EGF-like 3; calcium-binding" evidence="6">
    <location>
        <begin position="128"/>
        <end position="168"/>
    </location>
</feature>
<feature type="domain" description="EGF-like 4" evidence="6">
    <location>
        <begin position="177"/>
        <end position="213"/>
    </location>
</feature>
<feature type="domain" description="EGF-like 5" evidence="6">
    <location>
        <begin position="217"/>
        <end position="252"/>
    </location>
</feature>
<feature type="domain" description="EGF-like 6" evidence="6">
    <location>
        <begin position="286"/>
        <end position="321"/>
    </location>
</feature>
<feature type="domain" description="EGF-like 7; calcium-binding" evidence="6">
    <location>
        <begin position="323"/>
        <end position="363"/>
    </location>
</feature>
<feature type="domain" description="EGF-like 8; calcium-binding" evidence="6">
    <location>
        <begin position="364"/>
        <end position="402"/>
    </location>
</feature>
<feature type="domain" description="EGF-like 9; calcium-binding" evidence="6">
    <location>
        <begin position="403"/>
        <end position="443"/>
    </location>
</feature>
<feature type="domain" description="CUB" evidence="5">
    <location>
        <begin position="809"/>
        <end position="921"/>
    </location>
</feature>
<feature type="region of interest" description="Interaction with the cholesterol-anchor of SHH" evidence="3">
    <location>
        <begin position="847"/>
        <end position="856"/>
    </location>
</feature>
<feature type="glycosylation site" description="N-linked (GlcNAc...) asparagine" evidence="4">
    <location>
        <position position="659"/>
    </location>
</feature>
<feature type="disulfide bond" evidence="1">
    <location>
        <begin position="49"/>
        <end position="62"/>
    </location>
</feature>
<feature type="disulfide bond" evidence="1">
    <location>
        <begin position="56"/>
        <end position="71"/>
    </location>
</feature>
<feature type="disulfide bond" evidence="1">
    <location>
        <begin position="73"/>
        <end position="84"/>
    </location>
</feature>
<feature type="disulfide bond" evidence="1">
    <location>
        <begin position="90"/>
        <end position="102"/>
    </location>
</feature>
<feature type="disulfide bond" evidence="1">
    <location>
        <begin position="98"/>
        <end position="111"/>
    </location>
</feature>
<feature type="disulfide bond" evidence="1">
    <location>
        <begin position="113"/>
        <end position="126"/>
    </location>
</feature>
<feature type="disulfide bond" evidence="1">
    <location>
        <begin position="368"/>
        <end position="378"/>
    </location>
</feature>
<feature type="disulfide bond" evidence="1">
    <location>
        <begin position="374"/>
        <end position="387"/>
    </location>
</feature>
<feature type="disulfide bond" evidence="1">
    <location>
        <begin position="389"/>
        <end position="401"/>
    </location>
</feature>
<feature type="disulfide bond" evidence="1">
    <location>
        <begin position="407"/>
        <end position="418"/>
    </location>
</feature>
<feature type="disulfide bond" evidence="1">
    <location>
        <begin position="414"/>
        <end position="427"/>
    </location>
</feature>
<feature type="disulfide bond" evidence="1">
    <location>
        <begin position="429"/>
        <end position="442"/>
    </location>
</feature>
<feature type="disulfide bond" evidence="1">
    <location>
        <begin position="809"/>
        <end position="835"/>
    </location>
</feature>
<feature type="disulfide bond" evidence="1">
    <location>
        <begin position="862"/>
        <end position="883"/>
    </location>
</feature>
<feature type="splice variant" id="VSP_021293" description="In isoform 3." evidence="16">
    <location>
        <begin position="444"/>
        <end position="569"/>
    </location>
</feature>
<feature type="splice variant" id="VSP_021294" description="In isoform 2." evidence="15">
    <original>S</original>
    <variation>SGLQGAYSVTCGSSSPLRNKQQKSNDSAFG</variation>
    <location>
        <position position="482"/>
    </location>
</feature>
<feature type="splice variant" id="VSP_039955" description="In isoform 2." evidence="15">
    <location>
        <begin position="639"/>
        <end position="695"/>
    </location>
</feature>
<feature type="splice variant" id="VSP_021295" description="In isoform 3." evidence="16">
    <original>NRRCGGELGDFTGYIESPNYPGNYPANTECTWTINPPPKRRILIVVPEIFLPIEDDCGDYLVMRKTS</original>
    <variation>T</variation>
    <location>
        <begin position="806"/>
        <end position="872"/>
    </location>
</feature>
<feature type="sequence variant" id="VAR_028870" description="In dbSNP:rs3751055." evidence="8">
    <original>T</original>
    <variation>M</variation>
    <location>
        <position position="591"/>
    </location>
</feature>
<feature type="sequence variant" id="VAR_028871" description="In dbSNP:rs7395988.">
    <original>Q</original>
    <variation>H</variation>
    <location>
        <position position="712"/>
    </location>
</feature>
<feature type="sequence variant" id="VAR_028872" description="In dbSNP:rs12419343.">
    <original>V</original>
    <variation>G</variation>
    <location>
        <position position="752"/>
    </location>
</feature>
<feature type="sequence variant" id="VAR_028873" description="In dbSNP:rs3751057.">
    <original>T</original>
    <variation>S</variation>
    <location>
        <position position="791"/>
    </location>
</feature>
<feature type="sequence variant" id="VAR_028874" description="In dbSNP:rs3751059.">
    <original>P</original>
    <variation>R</variation>
    <location>
        <position position="843"/>
    </location>
</feature>
<feature type="sequence conflict" description="In Ref. 2; BAC85521." evidence="19" ref="2">
    <original>V</original>
    <variation>G</variation>
    <location>
        <position position="916"/>
    </location>
</feature>
<reference key="1">
    <citation type="journal article" date="2001" name="Cytogenet. Cell Genet.">
        <title>Comparative genomic sequencing reveals a strikingly similar architecture of a conserved syntenic region on human chromosome 11p15.3 (including gene ST5) and mouse chromosome 7.</title>
        <authorList>
            <person name="Amid C."/>
            <person name="Bahr A."/>
            <person name="Mujica A."/>
            <person name="Sampson N."/>
            <person name="Bikar S.E."/>
            <person name="Winterpacht A."/>
            <person name="Zabel B."/>
            <person name="Hankeln T."/>
            <person name="Schmidt E.R."/>
        </authorList>
    </citation>
    <scope>NUCLEOTIDE SEQUENCE [GENOMIC DNA] (ISOFORM 1)</scope>
</reference>
<reference key="2">
    <citation type="journal article" date="2004" name="Nat. Genet.">
        <title>Complete sequencing and characterization of 21,243 full-length human cDNAs.</title>
        <authorList>
            <person name="Ota T."/>
            <person name="Suzuki Y."/>
            <person name="Nishikawa T."/>
            <person name="Otsuki T."/>
            <person name="Sugiyama T."/>
            <person name="Irie R."/>
            <person name="Wakamatsu A."/>
            <person name="Hayashi K."/>
            <person name="Sato H."/>
            <person name="Nagai K."/>
            <person name="Kimura K."/>
            <person name="Makita H."/>
            <person name="Sekine M."/>
            <person name="Obayashi M."/>
            <person name="Nishi T."/>
            <person name="Shibahara T."/>
            <person name="Tanaka T."/>
            <person name="Ishii S."/>
            <person name="Yamamoto J."/>
            <person name="Saito K."/>
            <person name="Kawai Y."/>
            <person name="Isono Y."/>
            <person name="Nakamura Y."/>
            <person name="Nagahari K."/>
            <person name="Murakami K."/>
            <person name="Yasuda T."/>
            <person name="Iwayanagi T."/>
            <person name="Wagatsuma M."/>
            <person name="Shiratori A."/>
            <person name="Sudo H."/>
            <person name="Hosoiri T."/>
            <person name="Kaku Y."/>
            <person name="Kodaira H."/>
            <person name="Kondo H."/>
            <person name="Sugawara M."/>
            <person name="Takahashi M."/>
            <person name="Kanda K."/>
            <person name="Yokoi T."/>
            <person name="Furuya T."/>
            <person name="Kikkawa E."/>
            <person name="Omura Y."/>
            <person name="Abe K."/>
            <person name="Kamihara K."/>
            <person name="Katsuta N."/>
            <person name="Sato K."/>
            <person name="Tanikawa M."/>
            <person name="Yamazaki M."/>
            <person name="Ninomiya K."/>
            <person name="Ishibashi T."/>
            <person name="Yamashita H."/>
            <person name="Murakawa K."/>
            <person name="Fujimori K."/>
            <person name="Tanai H."/>
            <person name="Kimata M."/>
            <person name="Watanabe M."/>
            <person name="Hiraoka S."/>
            <person name="Chiba Y."/>
            <person name="Ishida S."/>
            <person name="Ono Y."/>
            <person name="Takiguchi S."/>
            <person name="Watanabe S."/>
            <person name="Yosida M."/>
            <person name="Hotuta T."/>
            <person name="Kusano J."/>
            <person name="Kanehori K."/>
            <person name="Takahashi-Fujii A."/>
            <person name="Hara H."/>
            <person name="Tanase T.-O."/>
            <person name="Nomura Y."/>
            <person name="Togiya S."/>
            <person name="Komai F."/>
            <person name="Hara R."/>
            <person name="Takeuchi K."/>
            <person name="Arita M."/>
            <person name="Imose N."/>
            <person name="Musashino K."/>
            <person name="Yuuki H."/>
            <person name="Oshima A."/>
            <person name="Sasaki N."/>
            <person name="Aotsuka S."/>
            <person name="Yoshikawa Y."/>
            <person name="Matsunawa H."/>
            <person name="Ichihara T."/>
            <person name="Shiohata N."/>
            <person name="Sano S."/>
            <person name="Moriya S."/>
            <person name="Momiyama H."/>
            <person name="Satoh N."/>
            <person name="Takami S."/>
            <person name="Terashima Y."/>
            <person name="Suzuki O."/>
            <person name="Nakagawa S."/>
            <person name="Senoh A."/>
            <person name="Mizoguchi H."/>
            <person name="Goto Y."/>
            <person name="Shimizu F."/>
            <person name="Wakebe H."/>
            <person name="Hishigaki H."/>
            <person name="Watanabe T."/>
            <person name="Sugiyama A."/>
            <person name="Takemoto M."/>
            <person name="Kawakami B."/>
            <person name="Yamazaki M."/>
            <person name="Watanabe K."/>
            <person name="Kumagai A."/>
            <person name="Itakura S."/>
            <person name="Fukuzumi Y."/>
            <person name="Fujimori Y."/>
            <person name="Komiyama M."/>
            <person name="Tashiro H."/>
            <person name="Tanigami A."/>
            <person name="Fujiwara T."/>
            <person name="Ono T."/>
            <person name="Yamada K."/>
            <person name="Fujii Y."/>
            <person name="Ozaki K."/>
            <person name="Hirao M."/>
            <person name="Ohmori Y."/>
            <person name="Kawabata A."/>
            <person name="Hikiji T."/>
            <person name="Kobatake N."/>
            <person name="Inagaki H."/>
            <person name="Ikema Y."/>
            <person name="Okamoto S."/>
            <person name="Okitani R."/>
            <person name="Kawakami T."/>
            <person name="Noguchi S."/>
            <person name="Itoh T."/>
            <person name="Shigeta K."/>
            <person name="Senba T."/>
            <person name="Matsumura K."/>
            <person name="Nakajima Y."/>
            <person name="Mizuno T."/>
            <person name="Morinaga M."/>
            <person name="Sasaki M."/>
            <person name="Togashi T."/>
            <person name="Oyama M."/>
            <person name="Hata H."/>
            <person name="Watanabe M."/>
            <person name="Komatsu T."/>
            <person name="Mizushima-Sugano J."/>
            <person name="Satoh T."/>
            <person name="Shirai Y."/>
            <person name="Takahashi Y."/>
            <person name="Nakagawa K."/>
            <person name="Okumura K."/>
            <person name="Nagase T."/>
            <person name="Nomura N."/>
            <person name="Kikuchi H."/>
            <person name="Masuho Y."/>
            <person name="Yamashita R."/>
            <person name="Nakai K."/>
            <person name="Yada T."/>
            <person name="Nakamura Y."/>
            <person name="Ohara O."/>
            <person name="Isogai T."/>
            <person name="Sugano S."/>
        </authorList>
    </citation>
    <scope>NUCLEOTIDE SEQUENCE [LARGE SCALE MRNA] (ISOFORM 2)</scope>
    <scope>VARIANT MET-591</scope>
</reference>
<reference key="3">
    <citation type="journal article" date="2006" name="Nature">
        <title>Human chromosome 11 DNA sequence and analysis including novel gene identification.</title>
        <authorList>
            <person name="Taylor T.D."/>
            <person name="Noguchi H."/>
            <person name="Totoki Y."/>
            <person name="Toyoda A."/>
            <person name="Kuroki Y."/>
            <person name="Dewar K."/>
            <person name="Lloyd C."/>
            <person name="Itoh T."/>
            <person name="Takeda T."/>
            <person name="Kim D.-W."/>
            <person name="She X."/>
            <person name="Barlow K.F."/>
            <person name="Bloom T."/>
            <person name="Bruford E."/>
            <person name="Chang J.L."/>
            <person name="Cuomo C.A."/>
            <person name="Eichler E."/>
            <person name="FitzGerald M.G."/>
            <person name="Jaffe D.B."/>
            <person name="LaButti K."/>
            <person name="Nicol R."/>
            <person name="Park H.-S."/>
            <person name="Seaman C."/>
            <person name="Sougnez C."/>
            <person name="Yang X."/>
            <person name="Zimmer A.R."/>
            <person name="Zody M.C."/>
            <person name="Birren B.W."/>
            <person name="Nusbaum C."/>
            <person name="Fujiyama A."/>
            <person name="Hattori M."/>
            <person name="Rogers J."/>
            <person name="Lander E.S."/>
            <person name="Sakaki Y."/>
        </authorList>
    </citation>
    <scope>NUCLEOTIDE SEQUENCE [LARGE SCALE GENOMIC DNA]</scope>
</reference>
<reference key="4">
    <citation type="journal article" date="2004" name="Genome Res.">
        <title>The status, quality, and expansion of the NIH full-length cDNA project: the Mammalian Gene Collection (MGC).</title>
        <authorList>
            <consortium name="The MGC Project Team"/>
        </authorList>
    </citation>
    <scope>NUCLEOTIDE SEQUENCE [LARGE SCALE MRNA] (ISOFORM 3)</scope>
</reference>
<reference key="5">
    <citation type="journal article" date="2002" name="J. Biol. Chem.">
        <title>Identification of a novel family of cell-surface proteins expressed in human vascular endothelium.</title>
        <authorList>
            <person name="Yang R.-B."/>
            <person name="Ng C.K.D."/>
            <person name="Wasserman S.M."/>
            <person name="Colman S.D."/>
            <person name="Shenoy S."/>
            <person name="Mehraban F."/>
            <person name="Koemueves L.G."/>
            <person name="Tomlinson J.E."/>
            <person name="Topper J.N."/>
        </authorList>
    </citation>
    <scope>TISSUE SPECIFICITY</scope>
</reference>
<reference key="6">
    <citation type="journal article" date="2009" name="Biochem. J.">
        <title>Isolation and characterization of a secreted, cell-surface glycoprotein SCUBE2 from humans.</title>
        <authorList>
            <person name="Tsai M.T."/>
            <person name="Cheng C.J."/>
            <person name="Lin Y.C."/>
            <person name="Chen C.C."/>
            <person name="Wu A.R."/>
            <person name="Wu M.T."/>
            <person name="Hsu C.C."/>
            <person name="Yang R.B."/>
        </authorList>
    </citation>
    <scope>SUBCELLULAR LOCATION</scope>
    <scope>SUBUNIT</scope>
    <scope>INTERACTION WITH SHH AND PTCH1</scope>
    <scope>FUNCTION</scope>
    <scope>PTM</scope>
</reference>
<reference key="7">
    <citation type="journal article" date="2012" name="Cell Rep.">
        <title>Dispatched and scube mediate the efficient secretion of the cholesterol-modified hedgehog ligand.</title>
        <authorList>
            <person name="Tukachinsky H."/>
            <person name="Kuzmickas R.P."/>
            <person name="Jao C.Y."/>
            <person name="Liu J."/>
            <person name="Salic A."/>
        </authorList>
    </citation>
    <scope>FUNCTION</scope>
    <scope>INTERACTION WITH SHH</scope>
    <scope>SUBUNIT</scope>
</reference>
<reference key="8">
    <citation type="journal article" date="2012" name="Genes Dev.">
        <title>Scube/You activity mediates release of dually lipid-modified Hedgehog signal in soluble form.</title>
        <authorList>
            <person name="Creanga A."/>
            <person name="Glenn T.D."/>
            <person name="Mann R.K."/>
            <person name="Saunders A.M."/>
            <person name="Talbot W.S."/>
            <person name="Beachy P.A."/>
        </authorList>
    </citation>
    <scope>FUNCTION</scope>
    <scope>INTERACTION WITH SHH</scope>
    <scope>SUBUNIT</scope>
</reference>
<reference key="9">
    <citation type="journal article" date="2014" name="J. Cell Sci.">
        <title>Scube2 enhances proteolytic Shh processing from the surface of Shh-producing cells.</title>
        <authorList>
            <person name="Jakobs P."/>
            <person name="Exner S."/>
            <person name="Schuermann S."/>
            <person name="Pickhinke U."/>
            <person name="Bandari S."/>
            <person name="Ortmann C."/>
            <person name="Kupich S."/>
            <person name="Schulz P."/>
            <person name="Hansen U."/>
            <person name="Seidler D.G."/>
            <person name="Grobe K."/>
        </authorList>
    </citation>
    <scope>INTERACTION WITH SHH</scope>
    <scope>FUNCTION</scope>
    <scope>SUBUNIT</scope>
    <scope>DOMAIN</scope>
</reference>
<reference key="10">
    <citation type="journal article" date="2016" name="Dev. Biol.">
        <title>Hedgehog receptor function during craniofacial development.</title>
        <authorList>
            <person name="Xavier G.M."/>
            <person name="Seppala M."/>
            <person name="Barrell W."/>
            <person name="Birjandi A.A."/>
            <person name="Geoghegan F."/>
            <person name="Cobourne M.T."/>
        </authorList>
    </citation>
    <scope>FUNCTION</scope>
    <scope>REVIEW</scope>
</reference>
<reference key="11">
    <citation type="journal article" date="2017" name="Arterioscler. Thromb. Vasc. Biol.">
        <title>Endothelial SCUBE2 interacts with VEGFR2 and regulates VEGF-induced angiogenesis.</title>
        <authorList>
            <person name="Lin Y.C."/>
            <person name="Chao T.Y."/>
            <person name="Yeh C.T."/>
            <person name="Roffler S.R."/>
            <person name="Kannagi R."/>
            <person name="Yang R.B."/>
        </authorList>
    </citation>
    <scope>FUNCTION</scope>
    <scope>INTERACTION WITH VEGFR2</scope>
</reference>
<reference key="12">
    <citation type="journal article" date="2021" name="Am. J. Hum. Genet.">
        <title>SCUBE3 loss-of-function causes a recognizable recessive developmental disorder due to defective bone morphogenetic protein signaling.</title>
        <authorList>
            <consortium name="Genomics England Research Consortium"/>
            <person name="Lin Y.C."/>
            <person name="Niceta M."/>
            <person name="Muto V."/>
            <person name="Vona B."/>
            <person name="Pagnamenta A.T."/>
            <person name="Maroofian R."/>
            <person name="Beetz C."/>
            <person name="van Duyvenvoorde H."/>
            <person name="Dentici M.L."/>
            <person name="Lauffer P."/>
            <person name="Vallian S."/>
            <person name="Ciolfi A."/>
            <person name="Pizzi S."/>
            <person name="Bauer P."/>
            <person name="Gruening N.M."/>
            <person name="Bellacchio E."/>
            <person name="Del Fattore A."/>
            <person name="Petrini S."/>
            <person name="Shaheen R."/>
            <person name="Tiosano D."/>
            <person name="Halloun R."/>
            <person name="Pode-Shakked B."/>
            <person name="Albayrak H.M."/>
            <person name="Isik E."/>
            <person name="Wit J.M."/>
            <person name="Dittrich M."/>
            <person name="Freire B.L."/>
            <person name="Bertola D.R."/>
            <person name="Jorge A.A.L."/>
            <person name="Barel O."/>
            <person name="Sabir A.H."/>
            <person name="Al Tenaiji A.M.J."/>
            <person name="Taji S.M."/>
            <person name="Al-Sannaa N."/>
            <person name="Al-Abdulwahed H."/>
            <person name="Digilio M.C."/>
            <person name="Irving M."/>
            <person name="Anikster Y."/>
            <person name="Bhavani G.S.L."/>
            <person name="Girisha K.M."/>
            <person name="Haaf T."/>
            <person name="Taylor J.C."/>
            <person name="Dallapiccola B."/>
            <person name="Alkuraya F.S."/>
            <person name="Yang R.B."/>
            <person name="Tartaglia M."/>
        </authorList>
    </citation>
    <scope>INTERACTION WITH SCUBE3</scope>
</reference>
<proteinExistence type="evidence at protein level"/>
<comment type="function">
    <text evidence="10 11 12 13 18">Lipid-binding protein required for SHH long-range signaling by binding to the dually lipid-modified SHH (ShhNp) and by promoting ShhNp mobilization, solubilization and release from the cell membrane (PubMed:22677548, PubMed:22902404). Acts by enhancing the proteolytic processing (shedding) of the lipid-modified N- and C- terminal of ShhNp at the cell surface (PubMed:24522195). Synergizes with DISP1 to increase SHH secretion (PubMed:22902404). Probable cell surface coreceptor for VEGFR2 involved in VEGFR2-mediated angiogenesis (PubMed:27834687).</text>
</comment>
<comment type="subunit">
    <text evidence="2 9 11 13 14">Forms homooligomers. Forms heterooligomers with SCUBE1. Forms heterooligomers with SCUBE3 (PubMed:33308444). Interacts with SHH via the cholesterol anchor of the dually lipid-modified SHH (ShhNp) (PubMed:19480626, PubMed:22902404). Interacts with PTCH1 (PubMed:19480626, PubMed:22902404). Interacts with VEGFR2 (PubMed:27834687).</text>
</comment>
<comment type="subcellular location">
    <subcellularLocation>
        <location>Secreted</location>
    </subcellularLocation>
    <subcellularLocation>
        <location evidence="9">Cell surface</location>
    </subcellularLocation>
    <text evidence="9">Secreted and tethered at the cell surface (PubMed:19480626).</text>
</comment>
<comment type="alternative products">
    <event type="alternative splicing"/>
    <isoform>
        <id>Q9NQ36-1</id>
        <name>1</name>
        <sequence type="displayed"/>
    </isoform>
    <isoform>
        <id>Q9NQ36-2</id>
        <name>2</name>
        <sequence type="described" ref="VSP_021294 VSP_039955"/>
    </isoform>
    <isoform>
        <id>Q9NQ36-3</id>
        <name>3</name>
        <sequence type="described" ref="VSP_021293 VSP_021295"/>
    </isoform>
</comment>
<comment type="tissue specificity">
    <text evidence="7">Expressed in a broad spectrum of adult tissues (PubMed:12270931).</text>
</comment>
<comment type="domain">
    <text evidence="12">The CUB domain is important for the interaction with the cholesterol-anchor of SHH. The CUB domain regulates protease recruitment and activation during SHH shedding.</text>
</comment>
<comment type="PTM">
    <text evidence="9">N-glycosylated.</text>
</comment>
<comment type="caution">
    <text evidence="10 11">It is unclear how SCUBE2 binds the dilipidated SHH. According to a report, the SHH cholesterol-anchor, but not palmitate, seems to be both necessary and sufficient for SCUBE2-mediated SHH release from the cell membrane (PubMed:22902404). According to a second paper, palmitoylation accelerates the rate of SCUBE2-mediated release (PubMed:22677548). Cholesterol modification is sufficient for a heterologous protein to bind to SCUBE2 and to be secreted in a SCUBE2-dependent manner (PubMed:22902404).</text>
</comment>
<gene>
    <name evidence="20" type="primary">SCUBE2</name>
    <name type="synonym">CEGP1</name>
</gene>